<keyword id="KW-0408">Iron</keyword>
<keyword id="KW-0411">Iron-sulfur</keyword>
<keyword id="KW-0479">Metal-binding</keyword>
<gene>
    <name evidence="1" type="primary">erpA</name>
    <name type="ordered locus">EcolC_3503</name>
</gene>
<organism>
    <name type="scientific">Escherichia coli (strain ATCC 8739 / DSM 1576 / NBRC 3972 / NCIMB 8545 / WDCM 00012 / Crooks)</name>
    <dbReference type="NCBI Taxonomy" id="481805"/>
    <lineage>
        <taxon>Bacteria</taxon>
        <taxon>Pseudomonadati</taxon>
        <taxon>Pseudomonadota</taxon>
        <taxon>Gammaproteobacteria</taxon>
        <taxon>Enterobacterales</taxon>
        <taxon>Enterobacteriaceae</taxon>
        <taxon>Escherichia</taxon>
    </lineage>
</organism>
<reference key="1">
    <citation type="submission" date="2008-02" db="EMBL/GenBank/DDBJ databases">
        <title>Complete sequence of Escherichia coli C str. ATCC 8739.</title>
        <authorList>
            <person name="Copeland A."/>
            <person name="Lucas S."/>
            <person name="Lapidus A."/>
            <person name="Glavina del Rio T."/>
            <person name="Dalin E."/>
            <person name="Tice H."/>
            <person name="Bruce D."/>
            <person name="Goodwin L."/>
            <person name="Pitluck S."/>
            <person name="Kiss H."/>
            <person name="Brettin T."/>
            <person name="Detter J.C."/>
            <person name="Han C."/>
            <person name="Kuske C.R."/>
            <person name="Schmutz J."/>
            <person name="Larimer F."/>
            <person name="Land M."/>
            <person name="Hauser L."/>
            <person name="Kyrpides N."/>
            <person name="Mikhailova N."/>
            <person name="Ingram L."/>
            <person name="Richardson P."/>
        </authorList>
    </citation>
    <scope>NUCLEOTIDE SEQUENCE [LARGE SCALE GENOMIC DNA]</scope>
    <source>
        <strain>ATCC 8739 / DSM 1576 / NBRC 3972 / NCIMB 8545 / WDCM 00012 / Crooks</strain>
    </source>
</reference>
<name>ERPA_ECOLC</name>
<protein>
    <recommendedName>
        <fullName evidence="1">Iron-sulfur cluster insertion protein ErpA</fullName>
    </recommendedName>
</protein>
<feature type="chain" id="PRO_1000144913" description="Iron-sulfur cluster insertion protein ErpA">
    <location>
        <begin position="1"/>
        <end position="114"/>
    </location>
</feature>
<feature type="binding site" evidence="1">
    <location>
        <position position="42"/>
    </location>
    <ligand>
        <name>iron-sulfur cluster</name>
        <dbReference type="ChEBI" id="CHEBI:30408"/>
    </ligand>
</feature>
<feature type="binding site" evidence="1">
    <location>
        <position position="106"/>
    </location>
    <ligand>
        <name>iron-sulfur cluster</name>
        <dbReference type="ChEBI" id="CHEBI:30408"/>
    </ligand>
</feature>
<feature type="binding site" evidence="1">
    <location>
        <position position="108"/>
    </location>
    <ligand>
        <name>iron-sulfur cluster</name>
        <dbReference type="ChEBI" id="CHEBI:30408"/>
    </ligand>
</feature>
<sequence>MSDDVALPLEFTDAAANKVKSLIADEDNPNLKLRVYITGGGCSGFQYGFTFDDQVNEGDMTIEKQGVGLVVDPMSLQYLVGGSVDYTEGLEGSRFIVTNPNAKSTCGCGSSFSI</sequence>
<accession>B1IQI4</accession>
<evidence type="ECO:0000255" key="1">
    <source>
        <dbReference type="HAMAP-Rule" id="MF_01380"/>
    </source>
</evidence>
<proteinExistence type="inferred from homology"/>
<dbReference type="EMBL" id="CP000946">
    <property type="protein sequence ID" value="ACA79117.1"/>
    <property type="molecule type" value="Genomic_DNA"/>
</dbReference>
<dbReference type="RefSeq" id="WP_001295564.1">
    <property type="nucleotide sequence ID" value="NZ_MTFT01000035.1"/>
</dbReference>
<dbReference type="SMR" id="B1IQI4"/>
<dbReference type="GeneID" id="93777270"/>
<dbReference type="KEGG" id="ecl:EcolC_3503"/>
<dbReference type="HOGENOM" id="CLU_069054_5_3_6"/>
<dbReference type="GO" id="GO:0005829">
    <property type="term" value="C:cytosol"/>
    <property type="evidence" value="ECO:0007669"/>
    <property type="project" value="TreeGrafter"/>
</dbReference>
<dbReference type="GO" id="GO:0051537">
    <property type="term" value="F:2 iron, 2 sulfur cluster binding"/>
    <property type="evidence" value="ECO:0007669"/>
    <property type="project" value="UniProtKB-ARBA"/>
</dbReference>
<dbReference type="GO" id="GO:0051539">
    <property type="term" value="F:4 iron, 4 sulfur cluster binding"/>
    <property type="evidence" value="ECO:0007669"/>
    <property type="project" value="TreeGrafter"/>
</dbReference>
<dbReference type="GO" id="GO:0005506">
    <property type="term" value="F:iron ion binding"/>
    <property type="evidence" value="ECO:0007669"/>
    <property type="project" value="UniProtKB-UniRule"/>
</dbReference>
<dbReference type="GO" id="GO:0016226">
    <property type="term" value="P:iron-sulfur cluster assembly"/>
    <property type="evidence" value="ECO:0007669"/>
    <property type="project" value="UniProtKB-UniRule"/>
</dbReference>
<dbReference type="FunFam" id="2.60.300.12:FF:000002">
    <property type="entry name" value="Iron-sulfur cluster insertion protein ErpA"/>
    <property type="match status" value="1"/>
</dbReference>
<dbReference type="Gene3D" id="2.60.300.12">
    <property type="entry name" value="HesB-like domain"/>
    <property type="match status" value="1"/>
</dbReference>
<dbReference type="HAMAP" id="MF_01380">
    <property type="entry name" value="Fe_S_insert_ErpA"/>
    <property type="match status" value="1"/>
</dbReference>
<dbReference type="InterPro" id="IPR000361">
    <property type="entry name" value="FeS_biogenesis"/>
</dbReference>
<dbReference type="InterPro" id="IPR016092">
    <property type="entry name" value="FeS_cluster_insertion"/>
</dbReference>
<dbReference type="InterPro" id="IPR017870">
    <property type="entry name" value="FeS_cluster_insertion_CS"/>
</dbReference>
<dbReference type="InterPro" id="IPR023063">
    <property type="entry name" value="FeS_cluster_insertion_RrpA"/>
</dbReference>
<dbReference type="InterPro" id="IPR035903">
    <property type="entry name" value="HesB-like_dom_sf"/>
</dbReference>
<dbReference type="NCBIfam" id="TIGR00049">
    <property type="entry name" value="iron-sulfur cluster assembly accessory protein"/>
    <property type="match status" value="1"/>
</dbReference>
<dbReference type="NCBIfam" id="NF010147">
    <property type="entry name" value="PRK13623.1"/>
    <property type="match status" value="1"/>
</dbReference>
<dbReference type="PANTHER" id="PTHR43011">
    <property type="entry name" value="IRON-SULFUR CLUSTER ASSEMBLY 2 HOMOLOG, MITOCHONDRIAL"/>
    <property type="match status" value="1"/>
</dbReference>
<dbReference type="PANTHER" id="PTHR43011:SF1">
    <property type="entry name" value="IRON-SULFUR CLUSTER ASSEMBLY 2 HOMOLOG, MITOCHONDRIAL"/>
    <property type="match status" value="1"/>
</dbReference>
<dbReference type="Pfam" id="PF01521">
    <property type="entry name" value="Fe-S_biosyn"/>
    <property type="match status" value="1"/>
</dbReference>
<dbReference type="SUPFAM" id="SSF89360">
    <property type="entry name" value="HesB-like domain"/>
    <property type="match status" value="1"/>
</dbReference>
<dbReference type="PROSITE" id="PS01152">
    <property type="entry name" value="HESB"/>
    <property type="match status" value="1"/>
</dbReference>
<comment type="function">
    <text evidence="1">Required for insertion of 4Fe-4S clusters for at least IspG.</text>
</comment>
<comment type="cofactor">
    <cofactor evidence="1">
        <name>iron-sulfur cluster</name>
        <dbReference type="ChEBI" id="CHEBI:30408"/>
    </cofactor>
    <text evidence="1">Binds 1 iron-sulfur cluster per subunit.</text>
</comment>
<comment type="subunit">
    <text evidence="1">Homodimer.</text>
</comment>
<comment type="similarity">
    <text evidence="1">Belongs to the HesB/IscA family.</text>
</comment>